<gene>
    <name evidence="7" type="ordered locus">Smlt2602</name>
</gene>
<organism>
    <name type="scientific">Stenotrophomonas maltophilia (strain K279a)</name>
    <dbReference type="NCBI Taxonomy" id="522373"/>
    <lineage>
        <taxon>Bacteria</taxon>
        <taxon>Pseudomonadati</taxon>
        <taxon>Pseudomonadota</taxon>
        <taxon>Gammaproteobacteria</taxon>
        <taxon>Lysobacterales</taxon>
        <taxon>Lysobacteraceae</taxon>
        <taxon>Stenotrophomonas</taxon>
        <taxon>Stenotrophomonas maltophilia group</taxon>
    </lineage>
</organism>
<sequence length="742" mass="82406">MRLQPLFVSLALAAPCALLPTASLSAAPAAAARQADTAPVLVTAAQWQQMASEGRRYPWFAKEQARTEATLKKMMKAGIDVPVPRDKGGGRTHEQHKRNYQALLAAGTLYRLTGDRAYVDYARDMLLQYAQLYPTLGPHPEGRGQIPGRVFWQVLNDSVWLVNAIQGYDAIRDALSAEDRNTIESKVFRPMAEFLVSEPKNYDQIHNHATWAVAATGMTGYVLRDQELVEKSLRGSQKDDKFGFLRQIDLLFSPDGYYEEGPYYQRYALAPFLLFANAIERNEPQRKIFARRDGVLLKAVDVLVQSSYGGLFFPINDAILDKGIDTEELVAGIGIAYARTGDDRLLSVAEQQKRLLLSPEGLQVAQALAANKAKPFDYHPMLLRDGPDGDRGGLAILRMNGERGQALVQKDTMQGMGHGHFDKLNWLFYDNGNPVVTDYGAARFLNVEAKRGGIYLAENRSWAKQTVAHNTLVVDEQSHFNGNWKRGEAHAPQVRFFQADADTQIASATMRDAYPGVAFTRTQALLRHPDLGLPVVLDLLQVHGDKAARYDLPLHFNGHIVTTGFEAEHFPSQRPVLGKDNGYQHLWLDARSKPGSEPRSLAWLLDGRFYTYRFGSSAPAQALLVESGANDPEFNLRREPALLQRVDGQKDVTFFSVLEPHGEYNGTAEYVHGADSRIREIVRTRGSDAEVIELRLASGARIALGVADNSATTSEHSVTVDGHVYRWNGSHARLDRSKGDGK</sequence>
<reference key="1">
    <citation type="journal article" date="2008" name="Genome Biol.">
        <title>The complete genome, comparative and functional analysis of Stenotrophomonas maltophilia reveals an organism heavily shielded by drug resistance determinants.</title>
        <authorList>
            <person name="Crossman L.C."/>
            <person name="Gould V.C."/>
            <person name="Dow J.M."/>
            <person name="Vernikos G.S."/>
            <person name="Okazaki A."/>
            <person name="Sebaihia M."/>
            <person name="Saunders D."/>
            <person name="Arrowsmith C."/>
            <person name="Carver T."/>
            <person name="Peters N."/>
            <person name="Adlem E."/>
            <person name="Kerhornou A."/>
            <person name="Lord A."/>
            <person name="Murphy L."/>
            <person name="Seeger K."/>
            <person name="Squares R."/>
            <person name="Rutter S."/>
            <person name="Quail M.A."/>
            <person name="Rajandream M.A."/>
            <person name="Harris D."/>
            <person name="Churcher C."/>
            <person name="Bentley S.D."/>
            <person name="Parkhill J."/>
            <person name="Thomson N.R."/>
            <person name="Avison M.B."/>
        </authorList>
    </citation>
    <scope>NUCLEOTIDE SEQUENCE [LARGE SCALE GENOMIC DNA]</scope>
    <source>
        <strain>K279a</strain>
    </source>
</reference>
<reference key="2">
    <citation type="journal article" date="2016" name="Biotechnol. Biofuels">
        <title>Engineering broad-spectrum digestion of polyuronides from an exolytic polysaccharide lyase.</title>
        <authorList>
            <person name="MacDonald L.C."/>
            <person name="Weiler E.B."/>
            <person name="Berger B.W."/>
        </authorList>
    </citation>
    <scope>FUNCTION</scope>
    <scope>CATALYTIC ACTIVITY</scope>
    <scope>BIOPHYSICOCHEMICAL PROPERTIES</scope>
    <scope>SUBSTRATE SPECIFICITY</scope>
    <scope>BIOTECHNOLOGY</scope>
    <scope>MUTAGENESIS OF GLN-153; ASN-207; HIS-208; TYR-264 AND TYR-455</scope>
    <scope>3D-STRUCTURE MODELING</scope>
    <scope>ACTIVE SITES</scope>
    <scope>REACTION MECHANISM</scope>
    <source>
        <strain>K279a</strain>
    </source>
</reference>
<evidence type="ECO:0000250" key="1">
    <source>
        <dbReference type="UniProtKB" id="Q21FJ0"/>
    </source>
</evidence>
<evidence type="ECO:0000255" key="2"/>
<evidence type="ECO:0000269" key="3">
    <source>
    </source>
</evidence>
<evidence type="ECO:0000303" key="4">
    <source>
    </source>
</evidence>
<evidence type="ECO:0000305" key="5"/>
<evidence type="ECO:0000305" key="6">
    <source>
    </source>
</evidence>
<evidence type="ECO:0000312" key="7">
    <source>
        <dbReference type="EMBL" id="CAQ46078.1"/>
    </source>
</evidence>
<protein>
    <recommendedName>
        <fullName evidence="6">Alginate lyase</fullName>
        <ecNumber evidence="6">4.2.2.26</ecNumber>
    </recommendedName>
    <alternativeName>
        <fullName evidence="5">Exolytic alginate lyase</fullName>
    </alternativeName>
    <alternativeName>
        <fullName evidence="4">Exolytic polysaccharide lyase</fullName>
    </alternativeName>
</protein>
<feature type="signal peptide" evidence="2">
    <location>
        <begin position="1"/>
        <end position="26"/>
    </location>
</feature>
<feature type="chain" id="PRO_5002777618" description="Alginate lyase">
    <location>
        <begin position="27"/>
        <end position="742"/>
    </location>
</feature>
<feature type="active site" description="Proton donor" evidence="6">
    <location>
        <position position="264"/>
    </location>
</feature>
<feature type="active site" description="Proton acceptor" evidence="6">
    <location>
        <position position="418"/>
    </location>
</feature>
<feature type="binding site" evidence="1">
    <location>
        <position position="143"/>
    </location>
    <ligand>
        <name>substrate</name>
    </ligand>
</feature>
<feature type="binding site" evidence="1">
    <location>
        <begin position="153"/>
        <end position="156"/>
    </location>
    <ligand>
        <name>substrate</name>
    </ligand>
</feature>
<feature type="binding site" evidence="1">
    <location>
        <position position="204"/>
    </location>
    <ligand>
        <name>substrate</name>
    </ligand>
</feature>
<feature type="binding site" evidence="1">
    <location>
        <position position="208"/>
    </location>
    <ligand>
        <name>substrate</name>
    </ligand>
</feature>
<feature type="binding site" evidence="1">
    <location>
        <begin position="263"/>
        <end position="266"/>
    </location>
    <ligand>
        <name>substrate</name>
    </ligand>
</feature>
<feature type="binding site" evidence="1">
    <location>
        <position position="420"/>
    </location>
    <ligand>
        <name>Zn(2+)</name>
        <dbReference type="ChEBI" id="CHEBI:29105"/>
    </ligand>
</feature>
<feature type="binding site" evidence="1">
    <location>
        <position position="438"/>
    </location>
    <ligand>
        <name>Zn(2+)</name>
        <dbReference type="ChEBI" id="CHEBI:29105"/>
    </ligand>
</feature>
<feature type="binding site" evidence="1">
    <location>
        <position position="443"/>
    </location>
    <ligand>
        <name>substrate</name>
    </ligand>
</feature>
<feature type="binding site" evidence="1">
    <location>
        <position position="469"/>
    </location>
    <ligand>
        <name>Zn(2+)</name>
        <dbReference type="ChEBI" id="CHEBI:29105"/>
    </ligand>
</feature>
<feature type="binding site" evidence="1">
    <location>
        <position position="669"/>
    </location>
    <ligand>
        <name>substrate</name>
    </ligand>
</feature>
<feature type="site" description="Neutralizes the sugar carboxylate group at subsite +1" evidence="6">
    <location>
        <position position="207"/>
    </location>
</feature>
<feature type="site" description="Neutralizes the sugar carboxylate group at subsite +1" evidence="6">
    <location>
        <position position="208"/>
    </location>
</feature>
<feature type="mutagenesis site" description="2- to 3-fold decrease in activity against alginate and its three block structures." evidence="3">
    <original>Q</original>
    <variation>A</variation>
    <variation>N</variation>
    <location>
        <position position="153"/>
    </location>
</feature>
<feature type="mutagenesis site" description="Complete loss of activity against alginate and its three block structures." evidence="3">
    <original>N</original>
    <variation>L</variation>
    <location>
        <position position="207"/>
    </location>
</feature>
<feature type="mutagenesis site" description="Displays same catalytic activity toward poly-GlcA as wild-type." evidence="3">
    <original>H</original>
    <variation>A</variation>
    <location>
        <position position="208"/>
    </location>
</feature>
<feature type="mutagenesis site" description="Exhibits 30% of wild-type activity against alginate and poly-ManA and 5 and 8% wild-type activity against poly-GulA and poly-MG, respectively. Significantly influences the substrate specificity since the mutant exhibits significant exolytic activity toward poly-GlcA, with a 35-fold increase in catalytic efficiency over wild-type toward poly-GlcA, a non-alginate-based substrate." evidence="3">
    <original>H</original>
    <variation>F</variation>
    <location>
        <position position="208"/>
    </location>
</feature>
<feature type="mutagenesis site" description="Complete loss of activity against alginate and its three block structures." evidence="3">
    <original>Y</original>
    <variation>F</variation>
    <location>
        <position position="264"/>
    </location>
</feature>
<feature type="mutagenesis site" description="Complete loss of activity against alginate and its three block structures." evidence="3">
    <original>H</original>
    <variation>F</variation>
    <location>
        <position position="418"/>
    </location>
</feature>
<feature type="mutagenesis site" description="Displays less than 1% alginate and poly-ManA activity compared to wild-type, yet approximately 8 and 4% wild-type activity toward poly-GulA and poly-MG." evidence="3">
    <original>Y</original>
    <variation>F</variation>
    <location>
        <position position="455"/>
    </location>
</feature>
<comment type="function">
    <text evidence="3">Polysaccharide lyase that catalyzes the depolymerization of alginate via a beta-elimination mechanism, cleaving the beta-1,4 glycosidic bond between two adjacent sugar residues. Acts specifically on alginate and each of its block structures, with highest activity toward poly-beta-D-mannuronate (poly-ManA). Shows an exolytic mode of action, producing unsaturated monomers. Displays a very low activity against poly-beta-D-glucuronate (poly-GlcA), and is not active on poly-alpha-D-galacturonate, hyaluronan, heparin, heparan sulfate and chondroitin sulfate.</text>
</comment>
<comment type="catalytic activity">
    <reaction evidence="6">
        <text>Cleavage of 4-deoxy-alpha-L-erythro-hex-4-enopyranuronoside oligosaccharides into 4-deoxy-alpha-L-erythro-hex-4-enopyranuronate monosaccharides.</text>
        <dbReference type="EC" id="4.2.2.26"/>
    </reaction>
</comment>
<comment type="cofactor">
    <cofactor evidence="1">
        <name>Zn(2+)</name>
        <dbReference type="ChEBI" id="CHEBI:29105"/>
    </cofactor>
    <text evidence="1">The zinc ion likely plays a structural role.</text>
</comment>
<comment type="biophysicochemical properties">
    <kinetics>
        <KM evidence="3">0.67 mM for alginate</KM>
        <KM evidence="3">0.41 mM for poly-ManA</KM>
        <KM evidence="3">5.99 mM for poly-GulA</KM>
        <KM evidence="3">0.57 mM for poly-MG</KM>
        <KM evidence="3">1.4 mM for poly-GlcA</KM>
        <text evidence="3">kcat is 34.8 sec(-1) with alginate as substrate. kcat is 62.2 sec(-1) with poly-ManA as substrate. kcat is 34.6 sec(-1) with poly-GulA as substrate. kcat is 22.2 sec(-1) with poly-MG as substrate. kcat is 0.4 sec(-1) with poly-GlcA as substrate.</text>
    </kinetics>
    <phDependence>
        <text evidence="3">Optimum pH is 8.5.</text>
    </phDependence>
</comment>
<comment type="subunit">
    <text evidence="1">Homodimer.</text>
</comment>
<comment type="subcellular location">
    <subcellularLocation>
        <location evidence="5">Periplasm</location>
    </subcellularLocation>
</comment>
<comment type="biotechnology">
    <text evidence="6">Is an attractive candidate for the broad-spectrum digestion of polyuronides into fermentable monomers for biofuel production.</text>
</comment>
<comment type="similarity">
    <text evidence="5">Belongs to the polysaccharide lyase 17 family.</text>
</comment>
<accession>B2FSW8</accession>
<dbReference type="EC" id="4.2.2.26" evidence="6"/>
<dbReference type="EMBL" id="AM743169">
    <property type="protein sequence ID" value="CAQ46078.1"/>
    <property type="molecule type" value="Genomic_DNA"/>
</dbReference>
<dbReference type="RefSeq" id="WP_012480338.1">
    <property type="nucleotide sequence ID" value="NC_010943.1"/>
</dbReference>
<dbReference type="SMR" id="B2FSW8"/>
<dbReference type="CAZy" id="PL17">
    <property type="family name" value="Polysaccharide Lyase Family 17"/>
</dbReference>
<dbReference type="EnsemblBacteria" id="CAQ46078">
    <property type="protein sequence ID" value="CAQ46078"/>
    <property type="gene ID" value="Smlt2602"/>
</dbReference>
<dbReference type="KEGG" id="sml:Smlt2602"/>
<dbReference type="PATRIC" id="fig|522373.3.peg.2443"/>
<dbReference type="eggNOG" id="ENOG502Z7XC">
    <property type="taxonomic scope" value="Bacteria"/>
</dbReference>
<dbReference type="HOGENOM" id="CLU_022650_0_0_6"/>
<dbReference type="BRENDA" id="4.2.2.26">
    <property type="organism ID" value="5134"/>
</dbReference>
<dbReference type="SABIO-RK" id="B2FSW8"/>
<dbReference type="Proteomes" id="UP000008840">
    <property type="component" value="Chromosome"/>
</dbReference>
<dbReference type="GO" id="GO:0042597">
    <property type="term" value="C:periplasmic space"/>
    <property type="evidence" value="ECO:0007669"/>
    <property type="project" value="UniProtKB-SubCell"/>
</dbReference>
<dbReference type="GO" id="GO:0052764">
    <property type="term" value="F:exo-oligoalginate lyase activity"/>
    <property type="evidence" value="ECO:0007669"/>
    <property type="project" value="UniProtKB-EC"/>
</dbReference>
<dbReference type="GO" id="GO:0046872">
    <property type="term" value="F:metal ion binding"/>
    <property type="evidence" value="ECO:0007669"/>
    <property type="project" value="UniProtKB-KW"/>
</dbReference>
<dbReference type="GO" id="GO:0000272">
    <property type="term" value="P:polysaccharide catabolic process"/>
    <property type="evidence" value="ECO:0007669"/>
    <property type="project" value="UniProtKB-KW"/>
</dbReference>
<dbReference type="Gene3D" id="2.70.98.70">
    <property type="match status" value="1"/>
</dbReference>
<dbReference type="Gene3D" id="1.50.10.100">
    <property type="entry name" value="Chondroitin AC/alginate lyase"/>
    <property type="match status" value="1"/>
</dbReference>
<dbReference type="InterPro" id="IPR054935">
    <property type="entry name" value="Alg_lyase"/>
</dbReference>
<dbReference type="InterPro" id="IPR008397">
    <property type="entry name" value="Alginate_lyase_dom"/>
</dbReference>
<dbReference type="InterPro" id="IPR008929">
    <property type="entry name" value="Chondroitin_lyas"/>
</dbReference>
<dbReference type="InterPro" id="IPR012480">
    <property type="entry name" value="Hepar_II_III_C"/>
</dbReference>
<dbReference type="NCBIfam" id="NF042990">
    <property type="entry name" value="olalg_lyase"/>
    <property type="match status" value="1"/>
</dbReference>
<dbReference type="PANTHER" id="PTHR39210">
    <property type="entry name" value="HEPARIN-SULFATE LYASE"/>
    <property type="match status" value="1"/>
</dbReference>
<dbReference type="PANTHER" id="PTHR39210:SF1">
    <property type="entry name" value="HEPARIN-SULFATE LYASE"/>
    <property type="match status" value="1"/>
</dbReference>
<dbReference type="Pfam" id="PF05426">
    <property type="entry name" value="Alginate_lyase"/>
    <property type="match status" value="1"/>
</dbReference>
<dbReference type="Pfam" id="PF07940">
    <property type="entry name" value="Hepar_II_III_C"/>
    <property type="match status" value="1"/>
</dbReference>
<dbReference type="SUPFAM" id="SSF48230">
    <property type="entry name" value="Chondroitin AC/alginate lyase"/>
    <property type="match status" value="1"/>
</dbReference>
<proteinExistence type="evidence at protein level"/>
<name>EALGL_STRMK</name>
<keyword id="KW-0119">Carbohydrate metabolism</keyword>
<keyword id="KW-0456">Lyase</keyword>
<keyword id="KW-0479">Metal-binding</keyword>
<keyword id="KW-0574">Periplasm</keyword>
<keyword id="KW-0624">Polysaccharide degradation</keyword>
<keyword id="KW-1185">Reference proteome</keyword>
<keyword id="KW-0732">Signal</keyword>
<keyword id="KW-0862">Zinc</keyword>